<comment type="function">
    <text evidence="2">Catalyzes the reversible phosphorolytic breakdown of the N-glycosidic bond in the beta-(deoxy)ribonucleoside molecules, with the formation of the corresponding free purine bases and pentose-1-phosphate.</text>
</comment>
<comment type="catalytic activity">
    <reaction evidence="2">
        <text>a purine D-ribonucleoside + phosphate = a purine nucleobase + alpha-D-ribose 1-phosphate</text>
        <dbReference type="Rhea" id="RHEA:19805"/>
        <dbReference type="ChEBI" id="CHEBI:26386"/>
        <dbReference type="ChEBI" id="CHEBI:43474"/>
        <dbReference type="ChEBI" id="CHEBI:57720"/>
        <dbReference type="ChEBI" id="CHEBI:142355"/>
        <dbReference type="EC" id="2.4.2.1"/>
    </reaction>
</comment>
<comment type="catalytic activity">
    <reaction evidence="2">
        <text>a purine 2'-deoxy-D-ribonucleoside + phosphate = a purine nucleobase + 2-deoxy-alpha-D-ribose 1-phosphate</text>
        <dbReference type="Rhea" id="RHEA:36431"/>
        <dbReference type="ChEBI" id="CHEBI:26386"/>
        <dbReference type="ChEBI" id="CHEBI:43474"/>
        <dbReference type="ChEBI" id="CHEBI:57259"/>
        <dbReference type="ChEBI" id="CHEBI:142361"/>
        <dbReference type="EC" id="2.4.2.1"/>
    </reaction>
</comment>
<comment type="subunit">
    <text evidence="2">Homohexamer; trimer of homodimers.</text>
</comment>
<comment type="similarity">
    <text evidence="2">Belongs to the PNP/UDP phosphorylase family.</text>
</comment>
<reference key="1">
    <citation type="journal article" date="2006" name="Proc. Natl. Acad. Sci. U.S.A.">
        <title>Comparative genomics of the lactic acid bacteria.</title>
        <authorList>
            <person name="Makarova K.S."/>
            <person name="Slesarev A."/>
            <person name="Wolf Y.I."/>
            <person name="Sorokin A."/>
            <person name="Mirkin B."/>
            <person name="Koonin E.V."/>
            <person name="Pavlov A."/>
            <person name="Pavlova N."/>
            <person name="Karamychev V."/>
            <person name="Polouchine N."/>
            <person name="Shakhova V."/>
            <person name="Grigoriev I."/>
            <person name="Lou Y."/>
            <person name="Rohksar D."/>
            <person name="Lucas S."/>
            <person name="Huang K."/>
            <person name="Goodstein D.M."/>
            <person name="Hawkins T."/>
            <person name="Plengvidhya V."/>
            <person name="Welker D."/>
            <person name="Hughes J."/>
            <person name="Goh Y."/>
            <person name="Benson A."/>
            <person name="Baldwin K."/>
            <person name="Lee J.-H."/>
            <person name="Diaz-Muniz I."/>
            <person name="Dosti B."/>
            <person name="Smeianov V."/>
            <person name="Wechter W."/>
            <person name="Barabote R."/>
            <person name="Lorca G."/>
            <person name="Altermann E."/>
            <person name="Barrangou R."/>
            <person name="Ganesan B."/>
            <person name="Xie Y."/>
            <person name="Rawsthorne H."/>
            <person name="Tamir D."/>
            <person name="Parker C."/>
            <person name="Breidt F."/>
            <person name="Broadbent J.R."/>
            <person name="Hutkins R."/>
            <person name="O'Sullivan D."/>
            <person name="Steele J."/>
            <person name="Unlu G."/>
            <person name="Saier M.H. Jr."/>
            <person name="Klaenhammer T."/>
            <person name="Richardson P."/>
            <person name="Kozyavkin S."/>
            <person name="Weimer B.C."/>
            <person name="Mills D.A."/>
        </authorList>
    </citation>
    <scope>NUCLEOTIDE SEQUENCE [LARGE SCALE GENOMIC DNA]</scope>
    <source>
        <strain>ATCC BAA-491 / LMD-9</strain>
    </source>
</reference>
<accession>Q03KK1</accession>
<proteinExistence type="inferred from homology"/>
<organism>
    <name type="scientific">Streptococcus thermophilus (strain ATCC BAA-491 / LMD-9)</name>
    <dbReference type="NCBI Taxonomy" id="322159"/>
    <lineage>
        <taxon>Bacteria</taxon>
        <taxon>Bacillati</taxon>
        <taxon>Bacillota</taxon>
        <taxon>Bacilli</taxon>
        <taxon>Lactobacillales</taxon>
        <taxon>Streptococcaceae</taxon>
        <taxon>Streptococcus</taxon>
    </lineage>
</organism>
<gene>
    <name evidence="2" type="primary">deoD</name>
    <name type="ordered locus">STER_1072</name>
</gene>
<sequence>MSIHISAKQGDIADKILLPGDPLRAKFIAENFLEDAVCFNEVRNMFGYTGTYKGERVSVMGTGMGMPSISIYARELIVDYGVKKLIRVGTAGSLNENVHVRELVLAQAAATNSNIIRNDWPQYDFPQIANFNLLDKAYHIAKNFGMTTHVGNVLSSDVFYSNYFEKNIELGKWGVKAVEMEAAALYYLAAQHQVDALAIMTISDSLVNPDEDTTAEERQNTFTDMMKVGLETLIAD</sequence>
<protein>
    <recommendedName>
        <fullName evidence="2">Purine nucleoside phosphorylase DeoD-type</fullName>
        <shortName evidence="2">PNP</shortName>
        <ecNumber evidence="2">2.4.2.1</ecNumber>
    </recommendedName>
</protein>
<name>DEOD_STRTD</name>
<feature type="chain" id="PRO_1000186236" description="Purine nucleoside phosphorylase DeoD-type">
    <location>
        <begin position="1"/>
        <end position="236"/>
    </location>
</feature>
<feature type="active site" description="Proton donor" evidence="2">
    <location>
        <position position="204"/>
    </location>
</feature>
<feature type="binding site" evidence="1">
    <location>
        <position position="4"/>
    </location>
    <ligand>
        <name>a purine D-ribonucleoside</name>
        <dbReference type="ChEBI" id="CHEBI:142355"/>
        <note>ligand shared between dimeric partners</note>
    </ligand>
</feature>
<feature type="binding site" description="in other chain" evidence="1">
    <location>
        <position position="20"/>
    </location>
    <ligand>
        <name>phosphate</name>
        <dbReference type="ChEBI" id="CHEBI:43474"/>
        <note>ligand shared between dimeric partners</note>
    </ligand>
</feature>
<feature type="binding site" description="in other chain" evidence="1">
    <location>
        <position position="24"/>
    </location>
    <ligand>
        <name>phosphate</name>
        <dbReference type="ChEBI" id="CHEBI:43474"/>
        <note>ligand shared between dimeric partners</note>
    </ligand>
</feature>
<feature type="binding site" evidence="1">
    <location>
        <position position="43"/>
    </location>
    <ligand>
        <name>phosphate</name>
        <dbReference type="ChEBI" id="CHEBI:43474"/>
        <note>ligand shared between dimeric partners</note>
    </ligand>
</feature>
<feature type="binding site" description="in other chain" evidence="1">
    <location>
        <begin position="87"/>
        <end position="90"/>
    </location>
    <ligand>
        <name>phosphate</name>
        <dbReference type="ChEBI" id="CHEBI:43474"/>
        <note>ligand shared between dimeric partners</note>
    </ligand>
</feature>
<feature type="binding site" description="in other chain" evidence="1">
    <location>
        <begin position="179"/>
        <end position="181"/>
    </location>
    <ligand>
        <name>a purine D-ribonucleoside</name>
        <dbReference type="ChEBI" id="CHEBI:142355"/>
        <note>ligand shared between dimeric partners</note>
    </ligand>
</feature>
<feature type="binding site" description="in other chain" evidence="1">
    <location>
        <begin position="203"/>
        <end position="204"/>
    </location>
    <ligand>
        <name>a purine D-ribonucleoside</name>
        <dbReference type="ChEBI" id="CHEBI:142355"/>
        <note>ligand shared between dimeric partners</note>
    </ligand>
</feature>
<feature type="site" description="Important for catalytic activity" evidence="2">
    <location>
        <position position="218"/>
    </location>
</feature>
<evidence type="ECO:0000250" key="1">
    <source>
        <dbReference type="UniProtKB" id="P50389"/>
    </source>
</evidence>
<evidence type="ECO:0000255" key="2">
    <source>
        <dbReference type="HAMAP-Rule" id="MF_01627"/>
    </source>
</evidence>
<keyword id="KW-0328">Glycosyltransferase</keyword>
<keyword id="KW-0808">Transferase</keyword>
<dbReference type="EC" id="2.4.2.1" evidence="2"/>
<dbReference type="EMBL" id="CP000419">
    <property type="protein sequence ID" value="ABJ66271.1"/>
    <property type="molecule type" value="Genomic_DNA"/>
</dbReference>
<dbReference type="RefSeq" id="WP_011681178.1">
    <property type="nucleotide sequence ID" value="NC_008532.1"/>
</dbReference>
<dbReference type="SMR" id="Q03KK1"/>
<dbReference type="KEGG" id="ste:STER_1072"/>
<dbReference type="HOGENOM" id="CLU_068457_2_0_9"/>
<dbReference type="GO" id="GO:0005829">
    <property type="term" value="C:cytosol"/>
    <property type="evidence" value="ECO:0007669"/>
    <property type="project" value="TreeGrafter"/>
</dbReference>
<dbReference type="GO" id="GO:0004731">
    <property type="term" value="F:purine-nucleoside phosphorylase activity"/>
    <property type="evidence" value="ECO:0007669"/>
    <property type="project" value="UniProtKB-UniRule"/>
</dbReference>
<dbReference type="GO" id="GO:0006152">
    <property type="term" value="P:purine nucleoside catabolic process"/>
    <property type="evidence" value="ECO:0007669"/>
    <property type="project" value="TreeGrafter"/>
</dbReference>
<dbReference type="CDD" id="cd09006">
    <property type="entry name" value="PNP_EcPNPI-like"/>
    <property type="match status" value="1"/>
</dbReference>
<dbReference type="Gene3D" id="3.40.50.1580">
    <property type="entry name" value="Nucleoside phosphorylase domain"/>
    <property type="match status" value="1"/>
</dbReference>
<dbReference type="HAMAP" id="MF_01627">
    <property type="entry name" value="Pur_nucleosid_phosp"/>
    <property type="match status" value="1"/>
</dbReference>
<dbReference type="InterPro" id="IPR004402">
    <property type="entry name" value="DeoD-type"/>
</dbReference>
<dbReference type="InterPro" id="IPR018016">
    <property type="entry name" value="Nucleoside_phosphorylase_CS"/>
</dbReference>
<dbReference type="InterPro" id="IPR000845">
    <property type="entry name" value="Nucleoside_phosphorylase_d"/>
</dbReference>
<dbReference type="InterPro" id="IPR035994">
    <property type="entry name" value="Nucleoside_phosphorylase_sf"/>
</dbReference>
<dbReference type="NCBIfam" id="TIGR00107">
    <property type="entry name" value="deoD"/>
    <property type="match status" value="1"/>
</dbReference>
<dbReference type="NCBIfam" id="NF004489">
    <property type="entry name" value="PRK05819.1"/>
    <property type="match status" value="1"/>
</dbReference>
<dbReference type="PANTHER" id="PTHR43691:SF11">
    <property type="entry name" value="FI09636P-RELATED"/>
    <property type="match status" value="1"/>
</dbReference>
<dbReference type="PANTHER" id="PTHR43691">
    <property type="entry name" value="URIDINE PHOSPHORYLASE"/>
    <property type="match status" value="1"/>
</dbReference>
<dbReference type="Pfam" id="PF01048">
    <property type="entry name" value="PNP_UDP_1"/>
    <property type="match status" value="1"/>
</dbReference>
<dbReference type="SUPFAM" id="SSF53167">
    <property type="entry name" value="Purine and uridine phosphorylases"/>
    <property type="match status" value="1"/>
</dbReference>
<dbReference type="PROSITE" id="PS01232">
    <property type="entry name" value="PNP_UDP_1"/>
    <property type="match status" value="1"/>
</dbReference>